<protein>
    <recommendedName>
        <fullName evidence="1">1-(5-phosphoribosyl)-5-[(5-phosphoribosylamino)methylideneamino] imidazole-4-carboxamide isomerase</fullName>
        <ecNumber evidence="1">5.3.1.16</ecNumber>
    </recommendedName>
    <alternativeName>
        <fullName evidence="1">Phosphoribosylformimino-5-aminoimidazole carboxamide ribotide isomerase</fullName>
    </alternativeName>
</protein>
<name>HIS4_MICAN</name>
<organism>
    <name type="scientific">Microcystis aeruginosa (strain NIES-843 / IAM M-2473)</name>
    <dbReference type="NCBI Taxonomy" id="449447"/>
    <lineage>
        <taxon>Bacteria</taxon>
        <taxon>Bacillati</taxon>
        <taxon>Cyanobacteriota</taxon>
        <taxon>Cyanophyceae</taxon>
        <taxon>Oscillatoriophycideae</taxon>
        <taxon>Chroococcales</taxon>
        <taxon>Microcystaceae</taxon>
        <taxon>Microcystis</taxon>
    </lineage>
</organism>
<comment type="catalytic activity">
    <reaction evidence="1">
        <text>1-(5-phospho-beta-D-ribosyl)-5-[(5-phospho-beta-D-ribosylamino)methylideneamino]imidazole-4-carboxamide = 5-[(5-phospho-1-deoxy-D-ribulos-1-ylimino)methylamino]-1-(5-phospho-beta-D-ribosyl)imidazole-4-carboxamide</text>
        <dbReference type="Rhea" id="RHEA:15469"/>
        <dbReference type="ChEBI" id="CHEBI:58435"/>
        <dbReference type="ChEBI" id="CHEBI:58525"/>
        <dbReference type="EC" id="5.3.1.16"/>
    </reaction>
</comment>
<comment type="pathway">
    <text evidence="1">Amino-acid biosynthesis; L-histidine biosynthesis; L-histidine from 5-phospho-alpha-D-ribose 1-diphosphate: step 4/9.</text>
</comment>
<comment type="subcellular location">
    <subcellularLocation>
        <location evidence="1">Cytoplasm</location>
    </subcellularLocation>
</comment>
<comment type="similarity">
    <text evidence="1">Belongs to the HisA/HisF family.</text>
</comment>
<feature type="chain" id="PRO_1000084100" description="1-(5-phosphoribosyl)-5-[(5-phosphoribosylamino)methylideneamino] imidazole-4-carboxamide isomerase">
    <location>
        <begin position="1"/>
        <end position="253"/>
    </location>
</feature>
<feature type="active site" description="Proton acceptor" evidence="1">
    <location>
        <position position="8"/>
    </location>
</feature>
<feature type="active site" description="Proton donor" evidence="1">
    <location>
        <position position="129"/>
    </location>
</feature>
<accession>B0JGL3</accession>
<reference key="1">
    <citation type="journal article" date="2007" name="DNA Res.">
        <title>Complete genomic structure of the bloom-forming toxic cyanobacterium Microcystis aeruginosa NIES-843.</title>
        <authorList>
            <person name="Kaneko T."/>
            <person name="Nakajima N."/>
            <person name="Okamoto S."/>
            <person name="Suzuki I."/>
            <person name="Tanabe Y."/>
            <person name="Tamaoki M."/>
            <person name="Nakamura Y."/>
            <person name="Kasai F."/>
            <person name="Watanabe A."/>
            <person name="Kawashima K."/>
            <person name="Kishida Y."/>
            <person name="Ono A."/>
            <person name="Shimizu Y."/>
            <person name="Takahashi C."/>
            <person name="Minami C."/>
            <person name="Fujishiro T."/>
            <person name="Kohara M."/>
            <person name="Katoh M."/>
            <person name="Nakazaki N."/>
            <person name="Nakayama S."/>
            <person name="Yamada M."/>
            <person name="Tabata S."/>
            <person name="Watanabe M.M."/>
        </authorList>
    </citation>
    <scope>NUCLEOTIDE SEQUENCE [LARGE SCALE GENOMIC DNA]</scope>
    <source>
        <strain>NIES-843 / IAM M-247</strain>
    </source>
</reference>
<gene>
    <name evidence="1" type="primary">hisA</name>
    <name type="ordered locus">MAE_54570</name>
</gene>
<sequence length="253" mass="26769">MEVIPAIDILDGKCVRLYQGDYQQSQVFNDNPAIVAREWVNQGATRLHLVDLDGAKEGKSVNLSTIETILNDIAIPVQVGGGLRDLETVSNLLKIGVEKAILGTVAVEKPELVSELCQSFPGQIIVGIDARDGKVATRGWLETSEVEAIALGQDMAKRGASTIIYTDIHRDGTLSGPNLAALRELAESVEIPVIASGGISSLTDLLSLLSLEPLGVTGVIVGRALYTGAVNLSEAISAIGSGRWQDVPPNFFA</sequence>
<evidence type="ECO:0000255" key="1">
    <source>
        <dbReference type="HAMAP-Rule" id="MF_01014"/>
    </source>
</evidence>
<proteinExistence type="inferred from homology"/>
<keyword id="KW-0028">Amino-acid biosynthesis</keyword>
<keyword id="KW-0963">Cytoplasm</keyword>
<keyword id="KW-0368">Histidine biosynthesis</keyword>
<keyword id="KW-0413">Isomerase</keyword>
<dbReference type="EC" id="5.3.1.16" evidence="1"/>
<dbReference type="EMBL" id="AP009552">
    <property type="protein sequence ID" value="BAG05279.1"/>
    <property type="molecule type" value="Genomic_DNA"/>
</dbReference>
<dbReference type="RefSeq" id="WP_002796216.1">
    <property type="nucleotide sequence ID" value="NC_010296.1"/>
</dbReference>
<dbReference type="SMR" id="B0JGL3"/>
<dbReference type="STRING" id="449447.MAE_54570"/>
<dbReference type="PaxDb" id="449447-MAE_54570"/>
<dbReference type="EnsemblBacteria" id="BAG05279">
    <property type="protein sequence ID" value="BAG05279"/>
    <property type="gene ID" value="MAE_54570"/>
</dbReference>
<dbReference type="KEGG" id="mar:MAE_54570"/>
<dbReference type="eggNOG" id="COG0106">
    <property type="taxonomic scope" value="Bacteria"/>
</dbReference>
<dbReference type="HOGENOM" id="CLU_048577_1_1_3"/>
<dbReference type="BioCyc" id="MAER449447:MAE_RS23720-MONOMER"/>
<dbReference type="UniPathway" id="UPA00031">
    <property type="reaction ID" value="UER00009"/>
</dbReference>
<dbReference type="Proteomes" id="UP000001510">
    <property type="component" value="Chromosome"/>
</dbReference>
<dbReference type="GO" id="GO:0005737">
    <property type="term" value="C:cytoplasm"/>
    <property type="evidence" value="ECO:0007669"/>
    <property type="project" value="UniProtKB-SubCell"/>
</dbReference>
<dbReference type="GO" id="GO:0003949">
    <property type="term" value="F:1-(5-phosphoribosyl)-5-[(5-phosphoribosylamino)methylideneamino]imidazole-4-carboxamide isomerase activity"/>
    <property type="evidence" value="ECO:0007669"/>
    <property type="project" value="UniProtKB-UniRule"/>
</dbReference>
<dbReference type="GO" id="GO:0000105">
    <property type="term" value="P:L-histidine biosynthetic process"/>
    <property type="evidence" value="ECO:0007669"/>
    <property type="project" value="UniProtKB-UniRule"/>
</dbReference>
<dbReference type="GO" id="GO:0000162">
    <property type="term" value="P:L-tryptophan biosynthetic process"/>
    <property type="evidence" value="ECO:0007669"/>
    <property type="project" value="TreeGrafter"/>
</dbReference>
<dbReference type="CDD" id="cd04732">
    <property type="entry name" value="HisA"/>
    <property type="match status" value="1"/>
</dbReference>
<dbReference type="FunFam" id="3.20.20.70:FF:000009">
    <property type="entry name" value="1-(5-phosphoribosyl)-5-[(5-phosphoribosylamino)methylideneamino] imidazole-4-carboxamide isomerase"/>
    <property type="match status" value="1"/>
</dbReference>
<dbReference type="Gene3D" id="3.20.20.70">
    <property type="entry name" value="Aldolase class I"/>
    <property type="match status" value="1"/>
</dbReference>
<dbReference type="HAMAP" id="MF_01014">
    <property type="entry name" value="HisA"/>
    <property type="match status" value="1"/>
</dbReference>
<dbReference type="InterPro" id="IPR013785">
    <property type="entry name" value="Aldolase_TIM"/>
</dbReference>
<dbReference type="InterPro" id="IPR006062">
    <property type="entry name" value="His_biosynth"/>
</dbReference>
<dbReference type="InterPro" id="IPR006063">
    <property type="entry name" value="HisA_bact_arch"/>
</dbReference>
<dbReference type="InterPro" id="IPR044524">
    <property type="entry name" value="Isoase_HisA-like"/>
</dbReference>
<dbReference type="InterPro" id="IPR023016">
    <property type="entry name" value="Isoase_HisA-like_bact"/>
</dbReference>
<dbReference type="InterPro" id="IPR011060">
    <property type="entry name" value="RibuloseP-bd_barrel"/>
</dbReference>
<dbReference type="NCBIfam" id="TIGR00007">
    <property type="entry name" value="1-(5-phosphoribosyl)-5-[(5-phosphoribosylamino)methylideneamino]imidazole-4-carboxamide isomerase"/>
    <property type="match status" value="1"/>
</dbReference>
<dbReference type="NCBIfam" id="NF010112">
    <property type="entry name" value="PRK13585.1"/>
    <property type="match status" value="1"/>
</dbReference>
<dbReference type="PANTHER" id="PTHR43090">
    <property type="entry name" value="1-(5-PHOSPHORIBOSYL)-5-[(5-PHOSPHORIBOSYLAMINO)METHYLIDENEAMINO] IMIDAZOLE-4-CARBOXAMIDE ISOMERASE"/>
    <property type="match status" value="1"/>
</dbReference>
<dbReference type="PANTHER" id="PTHR43090:SF2">
    <property type="entry name" value="1-(5-PHOSPHORIBOSYL)-5-[(5-PHOSPHORIBOSYLAMINO)METHYLIDENEAMINO] IMIDAZOLE-4-CARBOXAMIDE ISOMERASE"/>
    <property type="match status" value="1"/>
</dbReference>
<dbReference type="Pfam" id="PF00977">
    <property type="entry name" value="His_biosynth"/>
    <property type="match status" value="1"/>
</dbReference>
<dbReference type="SUPFAM" id="SSF51366">
    <property type="entry name" value="Ribulose-phoshate binding barrel"/>
    <property type="match status" value="1"/>
</dbReference>